<comment type="function">
    <text evidence="1">Negative regulator of sigma-B activity. Phosphorylates and inactivates its specific antagonist protein, RsbV. Upon phosphorylation of RsbV, RsbW is released and binds to sigma-B, thereby blocking its ability to form an RNA polymerase holoenzyme (E-sigma-B).</text>
</comment>
<comment type="catalytic activity">
    <reaction evidence="1">
        <text>L-seryl-[protein] + ATP = O-phospho-L-seryl-[protein] + ADP + H(+)</text>
        <dbReference type="Rhea" id="RHEA:17989"/>
        <dbReference type="Rhea" id="RHEA-COMP:9863"/>
        <dbReference type="Rhea" id="RHEA-COMP:11604"/>
        <dbReference type="ChEBI" id="CHEBI:15378"/>
        <dbReference type="ChEBI" id="CHEBI:29999"/>
        <dbReference type="ChEBI" id="CHEBI:30616"/>
        <dbReference type="ChEBI" id="CHEBI:83421"/>
        <dbReference type="ChEBI" id="CHEBI:456216"/>
        <dbReference type="EC" id="2.7.11.1"/>
    </reaction>
</comment>
<comment type="catalytic activity">
    <reaction evidence="1">
        <text>L-threonyl-[protein] + ATP = O-phospho-L-threonyl-[protein] + ADP + H(+)</text>
        <dbReference type="Rhea" id="RHEA:46608"/>
        <dbReference type="Rhea" id="RHEA-COMP:11060"/>
        <dbReference type="Rhea" id="RHEA-COMP:11605"/>
        <dbReference type="ChEBI" id="CHEBI:15378"/>
        <dbReference type="ChEBI" id="CHEBI:30013"/>
        <dbReference type="ChEBI" id="CHEBI:30616"/>
        <dbReference type="ChEBI" id="CHEBI:61977"/>
        <dbReference type="ChEBI" id="CHEBI:456216"/>
        <dbReference type="EC" id="2.7.11.1"/>
    </reaction>
</comment>
<comment type="similarity">
    <text evidence="1">Belongs to the anti-sigma-factor family.</text>
</comment>
<protein>
    <recommendedName>
        <fullName evidence="1">Serine-protein kinase RsbW</fullName>
        <ecNumber evidence="1">2.7.11.1</ecNumber>
    </recommendedName>
    <alternativeName>
        <fullName evidence="1">Anti-sigma-B factor</fullName>
    </alternativeName>
    <alternativeName>
        <fullName evidence="1">Sigma-B negative effector RsbW</fullName>
    </alternativeName>
</protein>
<gene>
    <name evidence="1" type="primary">rsbW</name>
    <name type="ordered locus">SAS1970</name>
</gene>
<name>RSBW_STAAS</name>
<accession>Q6G7P4</accession>
<reference key="1">
    <citation type="journal article" date="2004" name="Proc. Natl. Acad. Sci. U.S.A.">
        <title>Complete genomes of two clinical Staphylococcus aureus strains: evidence for the rapid evolution of virulence and drug resistance.</title>
        <authorList>
            <person name="Holden M.T.G."/>
            <person name="Feil E.J."/>
            <person name="Lindsay J.A."/>
            <person name="Peacock S.J."/>
            <person name="Day N.P.J."/>
            <person name="Enright M.C."/>
            <person name="Foster T.J."/>
            <person name="Moore C.E."/>
            <person name="Hurst L."/>
            <person name="Atkin R."/>
            <person name="Barron A."/>
            <person name="Bason N."/>
            <person name="Bentley S.D."/>
            <person name="Chillingworth C."/>
            <person name="Chillingworth T."/>
            <person name="Churcher C."/>
            <person name="Clark L."/>
            <person name="Corton C."/>
            <person name="Cronin A."/>
            <person name="Doggett J."/>
            <person name="Dowd L."/>
            <person name="Feltwell T."/>
            <person name="Hance Z."/>
            <person name="Harris B."/>
            <person name="Hauser H."/>
            <person name="Holroyd S."/>
            <person name="Jagels K."/>
            <person name="James K.D."/>
            <person name="Lennard N."/>
            <person name="Line A."/>
            <person name="Mayes R."/>
            <person name="Moule S."/>
            <person name="Mungall K."/>
            <person name="Ormond D."/>
            <person name="Quail M.A."/>
            <person name="Rabbinowitsch E."/>
            <person name="Rutherford K.M."/>
            <person name="Sanders M."/>
            <person name="Sharp S."/>
            <person name="Simmonds M."/>
            <person name="Stevens K."/>
            <person name="Whitehead S."/>
            <person name="Barrell B.G."/>
            <person name="Spratt B.G."/>
            <person name="Parkhill J."/>
        </authorList>
    </citation>
    <scope>NUCLEOTIDE SEQUENCE [LARGE SCALE GENOMIC DNA]</scope>
    <source>
        <strain>MSSA476</strain>
    </source>
</reference>
<feature type="chain" id="PRO_0000203541" description="Serine-protein kinase RsbW">
    <location>
        <begin position="1"/>
        <end position="159"/>
    </location>
</feature>
<proteinExistence type="inferred from homology"/>
<sequence>MQSKEDFIEMRVPASAEYVSLIRLTLSGVFSRAGATYDDIEDAKIAVSEAVTNAVKHAYKENNNVGIINIYFEILEDKIKIVISDKGDSFDYETTKSKIGPYDKNENIDFLREGGLGLFLIESLMDEVTVYKESGVTISMTKYIKKEQVRNNGERVEIS</sequence>
<keyword id="KW-0067">ATP-binding</keyword>
<keyword id="KW-0418">Kinase</keyword>
<keyword id="KW-0547">Nucleotide-binding</keyword>
<keyword id="KW-0723">Serine/threonine-protein kinase</keyword>
<keyword id="KW-0808">Transferase</keyword>
<evidence type="ECO:0000255" key="1">
    <source>
        <dbReference type="HAMAP-Rule" id="MF_00638"/>
    </source>
</evidence>
<organism>
    <name type="scientific">Staphylococcus aureus (strain MSSA476)</name>
    <dbReference type="NCBI Taxonomy" id="282459"/>
    <lineage>
        <taxon>Bacteria</taxon>
        <taxon>Bacillati</taxon>
        <taxon>Bacillota</taxon>
        <taxon>Bacilli</taxon>
        <taxon>Bacillales</taxon>
        <taxon>Staphylococcaceae</taxon>
        <taxon>Staphylococcus</taxon>
    </lineage>
</organism>
<dbReference type="EC" id="2.7.11.1" evidence="1"/>
<dbReference type="EMBL" id="BX571857">
    <property type="protein sequence ID" value="CAG43777.1"/>
    <property type="molecule type" value="Genomic_DNA"/>
</dbReference>
<dbReference type="RefSeq" id="WP_001190830.1">
    <property type="nucleotide sequence ID" value="NC_002953.3"/>
</dbReference>
<dbReference type="SMR" id="Q6G7P4"/>
<dbReference type="KEGG" id="sas:SAS1970"/>
<dbReference type="HOGENOM" id="CLU_090336_11_1_9"/>
<dbReference type="GO" id="GO:0005524">
    <property type="term" value="F:ATP binding"/>
    <property type="evidence" value="ECO:0007669"/>
    <property type="project" value="UniProtKB-KW"/>
</dbReference>
<dbReference type="GO" id="GO:0106310">
    <property type="term" value="F:protein serine kinase activity"/>
    <property type="evidence" value="ECO:0007669"/>
    <property type="project" value="RHEA"/>
</dbReference>
<dbReference type="GO" id="GO:0004674">
    <property type="term" value="F:protein serine/threonine kinase activity"/>
    <property type="evidence" value="ECO:0007669"/>
    <property type="project" value="UniProtKB-KW"/>
</dbReference>
<dbReference type="GO" id="GO:0016989">
    <property type="term" value="F:sigma factor antagonist activity"/>
    <property type="evidence" value="ECO:0007669"/>
    <property type="project" value="InterPro"/>
</dbReference>
<dbReference type="CDD" id="cd16936">
    <property type="entry name" value="HATPase_RsbW-like"/>
    <property type="match status" value="1"/>
</dbReference>
<dbReference type="Gene3D" id="3.30.565.10">
    <property type="entry name" value="Histidine kinase-like ATPase, C-terminal domain"/>
    <property type="match status" value="1"/>
</dbReference>
<dbReference type="HAMAP" id="MF_00638">
    <property type="entry name" value="Anti_sigma_B"/>
    <property type="match status" value="1"/>
</dbReference>
<dbReference type="InterPro" id="IPR050267">
    <property type="entry name" value="Anti-sigma-factor_SerPK"/>
</dbReference>
<dbReference type="InterPro" id="IPR036890">
    <property type="entry name" value="HATPase_C_sf"/>
</dbReference>
<dbReference type="InterPro" id="IPR010193">
    <property type="entry name" value="RsbW"/>
</dbReference>
<dbReference type="NCBIfam" id="NF003144">
    <property type="entry name" value="PRK04069.1"/>
    <property type="match status" value="1"/>
</dbReference>
<dbReference type="NCBIfam" id="TIGR01924">
    <property type="entry name" value="rsbW_low_gc"/>
    <property type="match status" value="1"/>
</dbReference>
<dbReference type="PANTHER" id="PTHR35526">
    <property type="entry name" value="ANTI-SIGMA-F FACTOR RSBW-RELATED"/>
    <property type="match status" value="1"/>
</dbReference>
<dbReference type="PANTHER" id="PTHR35526:SF9">
    <property type="entry name" value="SERINE-PROTEIN KINASE RSBW"/>
    <property type="match status" value="1"/>
</dbReference>
<dbReference type="Pfam" id="PF13581">
    <property type="entry name" value="HATPase_c_2"/>
    <property type="match status" value="1"/>
</dbReference>
<dbReference type="SUPFAM" id="SSF55874">
    <property type="entry name" value="ATPase domain of HSP90 chaperone/DNA topoisomerase II/histidine kinase"/>
    <property type="match status" value="1"/>
</dbReference>